<organism>
    <name type="scientific">Moorella thermoacetica (strain ATCC 39073 / JCM 9320)</name>
    <dbReference type="NCBI Taxonomy" id="264732"/>
    <lineage>
        <taxon>Bacteria</taxon>
        <taxon>Bacillati</taxon>
        <taxon>Bacillota</taxon>
        <taxon>Clostridia</taxon>
        <taxon>Moorellales</taxon>
        <taxon>Moorellaceae</taxon>
        <taxon>Moorella</taxon>
    </lineage>
</organism>
<proteinExistence type="inferred from homology"/>
<protein>
    <recommendedName>
        <fullName evidence="1">Phospho-N-acetylmuramoyl-pentapeptide-transferase</fullName>
        <ecNumber evidence="1">2.7.8.13</ecNumber>
    </recommendedName>
    <alternativeName>
        <fullName evidence="1">UDP-MurNAc-pentapeptide phosphotransferase</fullName>
    </alternativeName>
</protein>
<sequence length="318" mass="33755">MIEALKPLVLAAVVTLILGPPVLAFLRRLKAGQTVRSDGPRSHLAKAGTPTMGGVLFLIGLTVSTLVLAPPSPLTLSTLILTWGYALIGLVDDGLKVILHRPLGLMARQKLGGQVLLGLVAGVAAMLWLGRGSVIQVPVTGWHWDLGWYYPLLAALLLVATTNAVNLTDGLDGLAAGITLWVALAYGILALTLGQGELVTFAMALAGGCLGFLVYNFHPARVFMGDTGSLALGAAIGFLAIMTRTELVLPVLGGVYVLETLSVILQVVSFRLTGRRLFRMSPLHHHFELGGWPESRVVLFFWALAIIMALAGLYLLTI</sequence>
<name>MRAY_MOOTA</name>
<gene>
    <name evidence="1" type="primary">mraY</name>
    <name type="ordered locus">Moth_0840</name>
</gene>
<keyword id="KW-0131">Cell cycle</keyword>
<keyword id="KW-0132">Cell division</keyword>
<keyword id="KW-1003">Cell membrane</keyword>
<keyword id="KW-0133">Cell shape</keyword>
<keyword id="KW-0961">Cell wall biogenesis/degradation</keyword>
<keyword id="KW-0460">Magnesium</keyword>
<keyword id="KW-0472">Membrane</keyword>
<keyword id="KW-0479">Metal-binding</keyword>
<keyword id="KW-0573">Peptidoglycan synthesis</keyword>
<keyword id="KW-0808">Transferase</keyword>
<keyword id="KW-0812">Transmembrane</keyword>
<keyword id="KW-1133">Transmembrane helix</keyword>
<feature type="chain" id="PRO_0000235457" description="Phospho-N-acetylmuramoyl-pentapeptide-transferase">
    <location>
        <begin position="1"/>
        <end position="318"/>
    </location>
</feature>
<feature type="transmembrane region" description="Helical" evidence="1">
    <location>
        <begin position="5"/>
        <end position="25"/>
    </location>
</feature>
<feature type="transmembrane region" description="Helical" evidence="1">
    <location>
        <begin position="50"/>
        <end position="70"/>
    </location>
</feature>
<feature type="transmembrane region" description="Helical" evidence="1">
    <location>
        <begin position="71"/>
        <end position="91"/>
    </location>
</feature>
<feature type="transmembrane region" description="Helical" evidence="1">
    <location>
        <begin position="115"/>
        <end position="135"/>
    </location>
</feature>
<feature type="transmembrane region" description="Helical" evidence="1">
    <location>
        <begin position="139"/>
        <end position="159"/>
    </location>
</feature>
<feature type="transmembrane region" description="Helical" evidence="1">
    <location>
        <begin position="173"/>
        <end position="193"/>
    </location>
</feature>
<feature type="transmembrane region" description="Helical" evidence="1">
    <location>
        <begin position="198"/>
        <end position="218"/>
    </location>
</feature>
<feature type="transmembrane region" description="Helical" evidence="1">
    <location>
        <begin position="222"/>
        <end position="242"/>
    </location>
</feature>
<feature type="transmembrane region" description="Helical" evidence="1">
    <location>
        <begin position="248"/>
        <end position="268"/>
    </location>
</feature>
<feature type="transmembrane region" description="Helical" evidence="1">
    <location>
        <begin position="298"/>
        <end position="318"/>
    </location>
</feature>
<reference key="1">
    <citation type="journal article" date="2008" name="Environ. Microbiol.">
        <title>The complete genome sequence of Moorella thermoacetica (f. Clostridium thermoaceticum).</title>
        <authorList>
            <person name="Pierce E."/>
            <person name="Xie G."/>
            <person name="Barabote R.D."/>
            <person name="Saunders E."/>
            <person name="Han C.S."/>
            <person name="Detter J.C."/>
            <person name="Richardson P."/>
            <person name="Brettin T.S."/>
            <person name="Das A."/>
            <person name="Ljungdahl L.G."/>
            <person name="Ragsdale S.W."/>
        </authorList>
    </citation>
    <scope>NUCLEOTIDE SEQUENCE [LARGE SCALE GENOMIC DNA]</scope>
    <source>
        <strain>ATCC 39073 / JCM 9320</strain>
    </source>
</reference>
<accession>Q2RK82</accession>
<evidence type="ECO:0000255" key="1">
    <source>
        <dbReference type="HAMAP-Rule" id="MF_00038"/>
    </source>
</evidence>
<dbReference type="EC" id="2.7.8.13" evidence="1"/>
<dbReference type="EMBL" id="CP000232">
    <property type="protein sequence ID" value="ABC19157.1"/>
    <property type="molecule type" value="Genomic_DNA"/>
</dbReference>
<dbReference type="RefSeq" id="YP_429700.1">
    <property type="nucleotide sequence ID" value="NC_007644.1"/>
</dbReference>
<dbReference type="SMR" id="Q2RK82"/>
<dbReference type="STRING" id="264732.Moth_0840"/>
<dbReference type="EnsemblBacteria" id="ABC19157">
    <property type="protein sequence ID" value="ABC19157"/>
    <property type="gene ID" value="Moth_0840"/>
</dbReference>
<dbReference type="KEGG" id="mta:Moth_0840"/>
<dbReference type="PATRIC" id="fig|264732.11.peg.902"/>
<dbReference type="eggNOG" id="COG0472">
    <property type="taxonomic scope" value="Bacteria"/>
</dbReference>
<dbReference type="HOGENOM" id="CLU_023982_0_1_9"/>
<dbReference type="OrthoDB" id="9805475at2"/>
<dbReference type="UniPathway" id="UPA00219"/>
<dbReference type="GO" id="GO:0005886">
    <property type="term" value="C:plasma membrane"/>
    <property type="evidence" value="ECO:0007669"/>
    <property type="project" value="UniProtKB-SubCell"/>
</dbReference>
<dbReference type="GO" id="GO:0046872">
    <property type="term" value="F:metal ion binding"/>
    <property type="evidence" value="ECO:0007669"/>
    <property type="project" value="UniProtKB-KW"/>
</dbReference>
<dbReference type="GO" id="GO:0008963">
    <property type="term" value="F:phospho-N-acetylmuramoyl-pentapeptide-transferase activity"/>
    <property type="evidence" value="ECO:0007669"/>
    <property type="project" value="UniProtKB-UniRule"/>
</dbReference>
<dbReference type="GO" id="GO:0051992">
    <property type="term" value="F:UDP-N-acetylmuramoyl-L-alanyl-D-glutamyl-meso-2,6-diaminopimelyl-D-alanyl-D-alanine:undecaprenyl-phosphate transferase activity"/>
    <property type="evidence" value="ECO:0007669"/>
    <property type="project" value="RHEA"/>
</dbReference>
<dbReference type="GO" id="GO:0051301">
    <property type="term" value="P:cell division"/>
    <property type="evidence" value="ECO:0007669"/>
    <property type="project" value="UniProtKB-KW"/>
</dbReference>
<dbReference type="GO" id="GO:0071555">
    <property type="term" value="P:cell wall organization"/>
    <property type="evidence" value="ECO:0007669"/>
    <property type="project" value="UniProtKB-KW"/>
</dbReference>
<dbReference type="GO" id="GO:0009252">
    <property type="term" value="P:peptidoglycan biosynthetic process"/>
    <property type="evidence" value="ECO:0007669"/>
    <property type="project" value="UniProtKB-UniRule"/>
</dbReference>
<dbReference type="GO" id="GO:0008360">
    <property type="term" value="P:regulation of cell shape"/>
    <property type="evidence" value="ECO:0007669"/>
    <property type="project" value="UniProtKB-KW"/>
</dbReference>
<dbReference type="CDD" id="cd06852">
    <property type="entry name" value="GT_MraY"/>
    <property type="match status" value="1"/>
</dbReference>
<dbReference type="HAMAP" id="MF_00038">
    <property type="entry name" value="MraY"/>
    <property type="match status" value="1"/>
</dbReference>
<dbReference type="InterPro" id="IPR000715">
    <property type="entry name" value="Glycosyl_transferase_4"/>
</dbReference>
<dbReference type="InterPro" id="IPR003524">
    <property type="entry name" value="PNAcMuramoyl-5peptid_Trfase"/>
</dbReference>
<dbReference type="InterPro" id="IPR018480">
    <property type="entry name" value="PNAcMuramoyl-5peptid_Trfase_CS"/>
</dbReference>
<dbReference type="NCBIfam" id="TIGR00445">
    <property type="entry name" value="mraY"/>
    <property type="match status" value="1"/>
</dbReference>
<dbReference type="PANTHER" id="PTHR22926">
    <property type="entry name" value="PHOSPHO-N-ACETYLMURAMOYL-PENTAPEPTIDE-TRANSFERASE"/>
    <property type="match status" value="1"/>
</dbReference>
<dbReference type="PANTHER" id="PTHR22926:SF5">
    <property type="entry name" value="PHOSPHO-N-ACETYLMURAMOYL-PENTAPEPTIDE-TRANSFERASE HOMOLOG"/>
    <property type="match status" value="1"/>
</dbReference>
<dbReference type="Pfam" id="PF00953">
    <property type="entry name" value="Glycos_transf_4"/>
    <property type="match status" value="1"/>
</dbReference>
<dbReference type="Pfam" id="PF10555">
    <property type="entry name" value="MraY_sig1"/>
    <property type="match status" value="1"/>
</dbReference>
<dbReference type="PROSITE" id="PS01347">
    <property type="entry name" value="MRAY_1"/>
    <property type="match status" value="1"/>
</dbReference>
<dbReference type="PROSITE" id="PS01348">
    <property type="entry name" value="MRAY_2"/>
    <property type="match status" value="1"/>
</dbReference>
<comment type="function">
    <text evidence="1">Catalyzes the initial step of the lipid cycle reactions in the biosynthesis of the cell wall peptidoglycan: transfers peptidoglycan precursor phospho-MurNAc-pentapeptide from UDP-MurNAc-pentapeptide onto the lipid carrier undecaprenyl phosphate, yielding undecaprenyl-pyrophosphoryl-MurNAc-pentapeptide, known as lipid I.</text>
</comment>
<comment type="catalytic activity">
    <reaction evidence="1">
        <text>UDP-N-acetyl-alpha-D-muramoyl-L-alanyl-gamma-D-glutamyl-meso-2,6-diaminopimeloyl-D-alanyl-D-alanine + di-trans,octa-cis-undecaprenyl phosphate = di-trans,octa-cis-undecaprenyl diphospho-N-acetyl-alpha-D-muramoyl-L-alanyl-D-glutamyl-meso-2,6-diaminopimeloyl-D-alanyl-D-alanine + UMP</text>
        <dbReference type="Rhea" id="RHEA:28386"/>
        <dbReference type="ChEBI" id="CHEBI:57865"/>
        <dbReference type="ChEBI" id="CHEBI:60392"/>
        <dbReference type="ChEBI" id="CHEBI:61386"/>
        <dbReference type="ChEBI" id="CHEBI:61387"/>
        <dbReference type="EC" id="2.7.8.13"/>
    </reaction>
</comment>
<comment type="cofactor">
    <cofactor evidence="1">
        <name>Mg(2+)</name>
        <dbReference type="ChEBI" id="CHEBI:18420"/>
    </cofactor>
</comment>
<comment type="pathway">
    <text evidence="1">Cell wall biogenesis; peptidoglycan biosynthesis.</text>
</comment>
<comment type="subcellular location">
    <subcellularLocation>
        <location evidence="1">Cell membrane</location>
        <topology evidence="1">Multi-pass membrane protein</topology>
    </subcellularLocation>
</comment>
<comment type="similarity">
    <text evidence="1">Belongs to the glycosyltransferase 4 family. MraY subfamily.</text>
</comment>